<reference key="1">
    <citation type="journal article" date="2002" name="Nature">
        <title>Sequence and analysis of chromosome 2 of Dictyostelium discoideum.</title>
        <authorList>
            <person name="Gloeckner G."/>
            <person name="Eichinger L."/>
            <person name="Szafranski K."/>
            <person name="Pachebat J.A."/>
            <person name="Bankier A.T."/>
            <person name="Dear P.H."/>
            <person name="Lehmann R."/>
            <person name="Baumgart C."/>
            <person name="Parra G."/>
            <person name="Abril J.F."/>
            <person name="Guigo R."/>
            <person name="Kumpf K."/>
            <person name="Tunggal B."/>
            <person name="Cox E.C."/>
            <person name="Quail M.A."/>
            <person name="Platzer M."/>
            <person name="Rosenthal A."/>
            <person name="Noegel A.A."/>
        </authorList>
    </citation>
    <scope>NUCLEOTIDE SEQUENCE [LARGE SCALE GENOMIC DNA]</scope>
    <source>
        <strain>AX4</strain>
    </source>
</reference>
<reference key="2">
    <citation type="journal article" date="2005" name="Nature">
        <title>The genome of the social amoeba Dictyostelium discoideum.</title>
        <authorList>
            <person name="Eichinger L."/>
            <person name="Pachebat J.A."/>
            <person name="Gloeckner G."/>
            <person name="Rajandream M.A."/>
            <person name="Sucgang R."/>
            <person name="Berriman M."/>
            <person name="Song J."/>
            <person name="Olsen R."/>
            <person name="Szafranski K."/>
            <person name="Xu Q."/>
            <person name="Tunggal B."/>
            <person name="Kummerfeld S."/>
            <person name="Madera M."/>
            <person name="Konfortov B.A."/>
            <person name="Rivero F."/>
            <person name="Bankier A.T."/>
            <person name="Lehmann R."/>
            <person name="Hamlin N."/>
            <person name="Davies R."/>
            <person name="Gaudet P."/>
            <person name="Fey P."/>
            <person name="Pilcher K."/>
            <person name="Chen G."/>
            <person name="Saunders D."/>
            <person name="Sodergren E.J."/>
            <person name="Davis P."/>
            <person name="Kerhornou A."/>
            <person name="Nie X."/>
            <person name="Hall N."/>
            <person name="Anjard C."/>
            <person name="Hemphill L."/>
            <person name="Bason N."/>
            <person name="Farbrother P."/>
            <person name="Desany B."/>
            <person name="Just E."/>
            <person name="Morio T."/>
            <person name="Rost R."/>
            <person name="Churcher C.M."/>
            <person name="Cooper J."/>
            <person name="Haydock S."/>
            <person name="van Driessche N."/>
            <person name="Cronin A."/>
            <person name="Goodhead I."/>
            <person name="Muzny D.M."/>
            <person name="Mourier T."/>
            <person name="Pain A."/>
            <person name="Lu M."/>
            <person name="Harper D."/>
            <person name="Lindsay R."/>
            <person name="Hauser H."/>
            <person name="James K.D."/>
            <person name="Quiles M."/>
            <person name="Madan Babu M."/>
            <person name="Saito T."/>
            <person name="Buchrieser C."/>
            <person name="Wardroper A."/>
            <person name="Felder M."/>
            <person name="Thangavelu M."/>
            <person name="Johnson D."/>
            <person name="Knights A."/>
            <person name="Loulseged H."/>
            <person name="Mungall K.L."/>
            <person name="Oliver K."/>
            <person name="Price C."/>
            <person name="Quail M.A."/>
            <person name="Urushihara H."/>
            <person name="Hernandez J."/>
            <person name="Rabbinowitsch E."/>
            <person name="Steffen D."/>
            <person name="Sanders M."/>
            <person name="Ma J."/>
            <person name="Kohara Y."/>
            <person name="Sharp S."/>
            <person name="Simmonds M.N."/>
            <person name="Spiegler S."/>
            <person name="Tivey A."/>
            <person name="Sugano S."/>
            <person name="White B."/>
            <person name="Walker D."/>
            <person name="Woodward J.R."/>
            <person name="Winckler T."/>
            <person name="Tanaka Y."/>
            <person name="Shaulsky G."/>
            <person name="Schleicher M."/>
            <person name="Weinstock G.M."/>
            <person name="Rosenthal A."/>
            <person name="Cox E.C."/>
            <person name="Chisholm R.L."/>
            <person name="Gibbs R.A."/>
            <person name="Loomis W.F."/>
            <person name="Platzer M."/>
            <person name="Kay R.R."/>
            <person name="Williams J.G."/>
            <person name="Dear P.H."/>
            <person name="Noegel A.A."/>
            <person name="Barrell B.G."/>
            <person name="Kuspa A."/>
        </authorList>
    </citation>
    <scope>NUCLEOTIDE SEQUENCE [LARGE SCALE GENOMIC DNA]</scope>
    <source>
        <strain>AX4</strain>
    </source>
</reference>
<organism>
    <name type="scientific">Dictyostelium discoideum</name>
    <name type="common">Social amoeba</name>
    <dbReference type="NCBI Taxonomy" id="44689"/>
    <lineage>
        <taxon>Eukaryota</taxon>
        <taxon>Amoebozoa</taxon>
        <taxon>Evosea</taxon>
        <taxon>Eumycetozoa</taxon>
        <taxon>Dictyostelia</taxon>
        <taxon>Dictyosteliales</taxon>
        <taxon>Dictyosteliaceae</taxon>
        <taxon>Dictyostelium</taxon>
    </lineage>
</organism>
<gene>
    <name type="primary">hspK</name>
    <name type="ORF">DDB_G0275525</name>
</gene>
<protein>
    <recommendedName>
        <fullName>Small heat shock protein hspK</fullName>
    </recommendedName>
</protein>
<evidence type="ECO:0000255" key="1">
    <source>
        <dbReference type="PROSITE-ProRule" id="PRU00285"/>
    </source>
</evidence>
<evidence type="ECO:0000256" key="2">
    <source>
        <dbReference type="SAM" id="MobiDB-lite"/>
    </source>
</evidence>
<comment type="similarity">
    <text evidence="1">Belongs to the small heat shock protein (HSP20) family.</text>
</comment>
<name>HSPK_DICDI</name>
<keyword id="KW-1185">Reference proteome</keyword>
<keyword id="KW-0346">Stress response</keyword>
<dbReference type="EMBL" id="AAFI02000013">
    <property type="protein sequence ID" value="EAL69513.1"/>
    <property type="molecule type" value="Genomic_DNA"/>
</dbReference>
<dbReference type="RefSeq" id="XP_643557.1">
    <property type="nucleotide sequence ID" value="XM_638465.1"/>
</dbReference>
<dbReference type="SMR" id="Q86H60"/>
<dbReference type="BioGRID" id="1245143">
    <property type="interactions" value="1"/>
</dbReference>
<dbReference type="STRING" id="44689.Q86H60"/>
<dbReference type="PaxDb" id="44689-DDB0232129"/>
<dbReference type="EnsemblProtists" id="EAL69513">
    <property type="protein sequence ID" value="EAL69513"/>
    <property type="gene ID" value="DDB_G0275525"/>
</dbReference>
<dbReference type="GeneID" id="8620140"/>
<dbReference type="KEGG" id="ddi:DDB_G0275525"/>
<dbReference type="dictyBase" id="DDB_G0275525">
    <property type="gene designation" value="hspK"/>
</dbReference>
<dbReference type="VEuPathDB" id="AmoebaDB:DDB_G0275525"/>
<dbReference type="eggNOG" id="ENOG502RI2P">
    <property type="taxonomic scope" value="Eukaryota"/>
</dbReference>
<dbReference type="HOGENOM" id="CLU_1506112_0_0_1"/>
<dbReference type="InParanoid" id="Q86H60"/>
<dbReference type="OMA" id="DICETPQ"/>
<dbReference type="PRO" id="PR:Q86H60"/>
<dbReference type="Proteomes" id="UP000002195">
    <property type="component" value="Chromosome 2"/>
</dbReference>
<dbReference type="GO" id="GO:0051082">
    <property type="term" value="F:unfolded protein binding"/>
    <property type="evidence" value="ECO:0000318"/>
    <property type="project" value="GO_Central"/>
</dbReference>
<dbReference type="GO" id="GO:0051259">
    <property type="term" value="P:protein complex oligomerization"/>
    <property type="evidence" value="ECO:0000318"/>
    <property type="project" value="GO_Central"/>
</dbReference>
<dbReference type="GO" id="GO:0006457">
    <property type="term" value="P:protein folding"/>
    <property type="evidence" value="ECO:0000318"/>
    <property type="project" value="GO_Central"/>
</dbReference>
<dbReference type="GO" id="GO:0009408">
    <property type="term" value="P:response to heat"/>
    <property type="evidence" value="ECO:0000318"/>
    <property type="project" value="GO_Central"/>
</dbReference>
<dbReference type="GO" id="GO:0042542">
    <property type="term" value="P:response to hydrogen peroxide"/>
    <property type="evidence" value="ECO:0000318"/>
    <property type="project" value="GO_Central"/>
</dbReference>
<dbReference type="GO" id="GO:0009651">
    <property type="term" value="P:response to salt stress"/>
    <property type="evidence" value="ECO:0000318"/>
    <property type="project" value="GO_Central"/>
</dbReference>
<dbReference type="CDD" id="cd06464">
    <property type="entry name" value="ACD_sHsps-like"/>
    <property type="match status" value="1"/>
</dbReference>
<dbReference type="Gene3D" id="2.60.40.790">
    <property type="match status" value="1"/>
</dbReference>
<dbReference type="InterPro" id="IPR002068">
    <property type="entry name" value="A-crystallin/Hsp20_dom"/>
</dbReference>
<dbReference type="InterPro" id="IPR008978">
    <property type="entry name" value="HSP20-like_chaperone"/>
</dbReference>
<dbReference type="InterPro" id="IPR031107">
    <property type="entry name" value="Small_HSP"/>
</dbReference>
<dbReference type="PANTHER" id="PTHR11527">
    <property type="entry name" value="HEAT-SHOCK PROTEIN 20 FAMILY MEMBER"/>
    <property type="match status" value="1"/>
</dbReference>
<dbReference type="Pfam" id="PF00011">
    <property type="entry name" value="HSP20"/>
    <property type="match status" value="1"/>
</dbReference>
<dbReference type="SUPFAM" id="SSF49764">
    <property type="entry name" value="HSP20-like chaperones"/>
    <property type="match status" value="1"/>
</dbReference>
<dbReference type="PROSITE" id="PS01031">
    <property type="entry name" value="SHSP"/>
    <property type="match status" value="1"/>
</dbReference>
<proteinExistence type="inferred from homology"/>
<feature type="chain" id="PRO_0000363907" description="Small heat shock protein hspK">
    <location>
        <begin position="1"/>
        <end position="179"/>
    </location>
</feature>
<feature type="domain" description="sHSP" evidence="1">
    <location>
        <begin position="32"/>
        <end position="178"/>
    </location>
</feature>
<feature type="region of interest" description="Disordered" evidence="2">
    <location>
        <begin position="80"/>
        <end position="122"/>
    </location>
</feature>
<feature type="compositionally biased region" description="Low complexity" evidence="2">
    <location>
        <begin position="87"/>
        <end position="114"/>
    </location>
</feature>
<sequence length="179" mass="19959">MTMEFDPRRERRKVQKKMNVFDHRLISSNSNHRINIWRPTVSIKDNKTHISIIFELAGISRDQISIEVTKENTLVITGEKKSKGGLNNLPSSSSSINSDSTTNTNTNTTTTTTTAPPPPSDAQLKNIITIGKFIRSYKLPPGTDSSKIKATMDDGLLEIIIPKDTPSEDRLKIPIQSKL</sequence>
<accession>Q86H60</accession>
<accession>Q552X1</accession>